<sequence>MLQEVVYCGICSYPPEYCEFSGKLKRCKVWLSENDTELYAKLYGNEIDEEVANAANKLGSSSIGEAREEKLEKDLLRLQAKQENREQRELAKKLSSKVVIKREARTKRKFIVAISGLEVFEIDMKKLAKTFASKFATGCSVSKNAEKKDEIVIQGDVLEEVEKYIHSLLEEKGLKNVKLEIIDSQKKKKKPTDEANSNNNNNNNNK</sequence>
<protein>
    <recommendedName>
        <fullName>Translation machinery-associated protein 22</fullName>
    </recommendedName>
</protein>
<gene>
    <name type="primary">TMA22</name>
    <name type="ORF">Kpol_1050p29</name>
</gene>
<dbReference type="EMBL" id="DS480381">
    <property type="protein sequence ID" value="EDO19172.1"/>
    <property type="molecule type" value="Genomic_DNA"/>
</dbReference>
<dbReference type="RefSeq" id="XP_001647030.1">
    <property type="nucleotide sequence ID" value="XM_001646980.1"/>
</dbReference>
<dbReference type="SMR" id="A7TES6"/>
<dbReference type="FunCoup" id="A7TES6">
    <property type="interactions" value="1242"/>
</dbReference>
<dbReference type="STRING" id="436907.A7TES6"/>
<dbReference type="GeneID" id="5547503"/>
<dbReference type="KEGG" id="vpo:Kpol_1050p29"/>
<dbReference type="eggNOG" id="KOG3239">
    <property type="taxonomic scope" value="Eukaryota"/>
</dbReference>
<dbReference type="HOGENOM" id="CLU_073511_0_1_1"/>
<dbReference type="InParanoid" id="A7TES6"/>
<dbReference type="OMA" id="EVFEIDM"/>
<dbReference type="OrthoDB" id="277199at2759"/>
<dbReference type="PhylomeDB" id="A7TES6"/>
<dbReference type="Proteomes" id="UP000000267">
    <property type="component" value="Unassembled WGS sequence"/>
</dbReference>
<dbReference type="GO" id="GO:0005737">
    <property type="term" value="C:cytoplasm"/>
    <property type="evidence" value="ECO:0007669"/>
    <property type="project" value="UniProtKB-SubCell"/>
</dbReference>
<dbReference type="GO" id="GO:1990904">
    <property type="term" value="C:ribonucleoprotein complex"/>
    <property type="evidence" value="ECO:0007669"/>
    <property type="project" value="UniProtKB-KW"/>
</dbReference>
<dbReference type="GO" id="GO:0005840">
    <property type="term" value="C:ribosome"/>
    <property type="evidence" value="ECO:0007669"/>
    <property type="project" value="UniProtKB-KW"/>
</dbReference>
<dbReference type="GO" id="GO:0003729">
    <property type="term" value="F:mRNA binding"/>
    <property type="evidence" value="ECO:0007669"/>
    <property type="project" value="TreeGrafter"/>
</dbReference>
<dbReference type="GO" id="GO:0003743">
    <property type="term" value="F:translation initiation factor activity"/>
    <property type="evidence" value="ECO:0007669"/>
    <property type="project" value="InterPro"/>
</dbReference>
<dbReference type="GO" id="GO:0001731">
    <property type="term" value="P:formation of translation preinitiation complex"/>
    <property type="evidence" value="ECO:0007669"/>
    <property type="project" value="TreeGrafter"/>
</dbReference>
<dbReference type="GO" id="GO:0000184">
    <property type="term" value="P:nuclear-transcribed mRNA catabolic process, nonsense-mediated decay"/>
    <property type="evidence" value="ECO:0007669"/>
    <property type="project" value="EnsemblFungi"/>
</dbReference>
<dbReference type="GO" id="GO:0032790">
    <property type="term" value="P:ribosome disassembly"/>
    <property type="evidence" value="ECO:0007669"/>
    <property type="project" value="EnsemblFungi"/>
</dbReference>
<dbReference type="GO" id="GO:0002188">
    <property type="term" value="P:translation reinitiation"/>
    <property type="evidence" value="ECO:0007669"/>
    <property type="project" value="TreeGrafter"/>
</dbReference>
<dbReference type="CDD" id="cd11607">
    <property type="entry name" value="DENR_C"/>
    <property type="match status" value="1"/>
</dbReference>
<dbReference type="FunFam" id="3.30.780.10:FF:000013">
    <property type="entry name" value="Translation machinery-associated protein 22"/>
    <property type="match status" value="1"/>
</dbReference>
<dbReference type="Gene3D" id="3.30.780.10">
    <property type="entry name" value="SUI1-like domain"/>
    <property type="match status" value="1"/>
</dbReference>
<dbReference type="InterPro" id="IPR050318">
    <property type="entry name" value="DENR/SUI1_TIF"/>
</dbReference>
<dbReference type="InterPro" id="IPR046447">
    <property type="entry name" value="DENR_C"/>
</dbReference>
<dbReference type="InterPro" id="IPR005873">
    <property type="entry name" value="DENR_eukaryotes"/>
</dbReference>
<dbReference type="InterPro" id="IPR048517">
    <property type="entry name" value="DENR_N"/>
</dbReference>
<dbReference type="InterPro" id="IPR001950">
    <property type="entry name" value="SUI1"/>
</dbReference>
<dbReference type="InterPro" id="IPR036877">
    <property type="entry name" value="SUI1_dom_sf"/>
</dbReference>
<dbReference type="NCBIfam" id="TIGR01159">
    <property type="entry name" value="DRP1"/>
    <property type="match status" value="1"/>
</dbReference>
<dbReference type="PANTHER" id="PTHR12789:SF0">
    <property type="entry name" value="DENSITY-REGULATED PROTEIN"/>
    <property type="match status" value="1"/>
</dbReference>
<dbReference type="PANTHER" id="PTHR12789">
    <property type="entry name" value="DENSITY-REGULATED PROTEIN HOMOLOG"/>
    <property type="match status" value="1"/>
</dbReference>
<dbReference type="Pfam" id="PF21023">
    <property type="entry name" value="DENR_N"/>
    <property type="match status" value="1"/>
</dbReference>
<dbReference type="Pfam" id="PF01253">
    <property type="entry name" value="SUI1"/>
    <property type="match status" value="1"/>
</dbReference>
<dbReference type="SUPFAM" id="SSF55159">
    <property type="entry name" value="eIF1-like"/>
    <property type="match status" value="1"/>
</dbReference>
<dbReference type="PROSITE" id="PS50296">
    <property type="entry name" value="SUI1"/>
    <property type="match status" value="1"/>
</dbReference>
<proteinExistence type="inferred from homology"/>
<reference key="1">
    <citation type="journal article" date="2007" name="Proc. Natl. Acad. Sci. U.S.A.">
        <title>Independent sorting-out of thousands of duplicated gene pairs in two yeast species descended from a whole-genome duplication.</title>
        <authorList>
            <person name="Scannell D.R."/>
            <person name="Frank A.C."/>
            <person name="Conant G.C."/>
            <person name="Byrne K.P."/>
            <person name="Woolfit M."/>
            <person name="Wolfe K.H."/>
        </authorList>
    </citation>
    <scope>NUCLEOTIDE SEQUENCE [LARGE SCALE GENOMIC DNA]</scope>
    <source>
        <strain>ATCC 22028 / DSM 70294 / BCRC 21397 / CBS 2163 / NBRC 10782 / NRRL Y-8283 / UCD 57-17</strain>
    </source>
</reference>
<feature type="chain" id="PRO_0000320450" description="Translation machinery-associated protein 22">
    <location>
        <begin position="1"/>
        <end position="206"/>
    </location>
</feature>
<feature type="domain" description="SUI1" evidence="2">
    <location>
        <begin position="98"/>
        <end position="169"/>
    </location>
</feature>
<feature type="region of interest" description="Disordered" evidence="3">
    <location>
        <begin position="184"/>
        <end position="206"/>
    </location>
</feature>
<feature type="compositionally biased region" description="Low complexity" evidence="3">
    <location>
        <begin position="196"/>
        <end position="206"/>
    </location>
</feature>
<name>DENR_VANPO</name>
<organism>
    <name type="scientific">Vanderwaltozyma polyspora (strain ATCC 22028 / DSM 70294 / BCRC 21397 / CBS 2163 / NBRC 10782 / NRRL Y-8283 / UCD 57-17)</name>
    <name type="common">Kluyveromyces polysporus</name>
    <dbReference type="NCBI Taxonomy" id="436907"/>
    <lineage>
        <taxon>Eukaryota</taxon>
        <taxon>Fungi</taxon>
        <taxon>Dikarya</taxon>
        <taxon>Ascomycota</taxon>
        <taxon>Saccharomycotina</taxon>
        <taxon>Saccharomycetes</taxon>
        <taxon>Saccharomycetales</taxon>
        <taxon>Saccharomycetaceae</taxon>
        <taxon>Vanderwaltozyma</taxon>
    </lineage>
</organism>
<keyword id="KW-0963">Cytoplasm</keyword>
<keyword id="KW-1185">Reference proteome</keyword>
<keyword id="KW-0687">Ribonucleoprotein</keyword>
<keyword id="KW-0689">Ribosomal protein</keyword>
<evidence type="ECO:0000250" key="1"/>
<evidence type="ECO:0000255" key="2">
    <source>
        <dbReference type="PROSITE-ProRule" id="PRU00200"/>
    </source>
</evidence>
<evidence type="ECO:0000256" key="3">
    <source>
        <dbReference type="SAM" id="MobiDB-lite"/>
    </source>
</evidence>
<evidence type="ECO:0000305" key="4"/>
<accession>A7TES6</accession>
<comment type="subunit">
    <text evidence="1">Interacts with the 40S ribosomal subunit.</text>
</comment>
<comment type="subcellular location">
    <subcellularLocation>
        <location evidence="1">Cytoplasm</location>
    </subcellularLocation>
</comment>
<comment type="domain">
    <text>The SUI1 domain may be involved in RNA binding.</text>
</comment>
<comment type="similarity">
    <text evidence="4">Belongs to the DENR family.</text>
</comment>